<evidence type="ECO:0000255" key="1">
    <source>
        <dbReference type="HAMAP-Rule" id="MF_00203"/>
    </source>
</evidence>
<protein>
    <recommendedName>
        <fullName evidence="1">UvrABC system protein C</fullName>
        <shortName evidence="1">Protein UvrC</shortName>
    </recommendedName>
    <alternativeName>
        <fullName evidence="1">Excinuclease ABC subunit C</fullName>
    </alternativeName>
</protein>
<reference key="1">
    <citation type="submission" date="2006-08" db="EMBL/GenBank/DDBJ databases">
        <title>Complete sequence of chromosome 1 of Burkholderia cenocepacia HI2424.</title>
        <authorList>
            <person name="Copeland A."/>
            <person name="Lucas S."/>
            <person name="Lapidus A."/>
            <person name="Barry K."/>
            <person name="Detter J.C."/>
            <person name="Glavina del Rio T."/>
            <person name="Hammon N."/>
            <person name="Israni S."/>
            <person name="Pitluck S."/>
            <person name="Chain P."/>
            <person name="Malfatti S."/>
            <person name="Shin M."/>
            <person name="Vergez L."/>
            <person name="Schmutz J."/>
            <person name="Larimer F."/>
            <person name="Land M."/>
            <person name="Hauser L."/>
            <person name="Kyrpides N."/>
            <person name="Kim E."/>
            <person name="LiPuma J.J."/>
            <person name="Gonzalez C.F."/>
            <person name="Konstantinidis K."/>
            <person name="Tiedje J.M."/>
            <person name="Richardson P."/>
        </authorList>
    </citation>
    <scope>NUCLEOTIDE SEQUENCE [LARGE SCALE GENOMIC DNA]</scope>
    <source>
        <strain>HI2424</strain>
    </source>
</reference>
<dbReference type="EMBL" id="CP000458">
    <property type="protein sequence ID" value="ABK07895.1"/>
    <property type="molecule type" value="Genomic_DNA"/>
</dbReference>
<dbReference type="RefSeq" id="WP_011544950.1">
    <property type="nucleotide sequence ID" value="NC_008542.1"/>
</dbReference>
<dbReference type="SMR" id="A0K5W8"/>
<dbReference type="KEGG" id="bch:Bcen2424_1143"/>
<dbReference type="HOGENOM" id="CLU_014841_3_0_4"/>
<dbReference type="GO" id="GO:0005737">
    <property type="term" value="C:cytoplasm"/>
    <property type="evidence" value="ECO:0007669"/>
    <property type="project" value="UniProtKB-SubCell"/>
</dbReference>
<dbReference type="GO" id="GO:0009380">
    <property type="term" value="C:excinuclease repair complex"/>
    <property type="evidence" value="ECO:0007669"/>
    <property type="project" value="InterPro"/>
</dbReference>
<dbReference type="GO" id="GO:0003677">
    <property type="term" value="F:DNA binding"/>
    <property type="evidence" value="ECO:0007669"/>
    <property type="project" value="UniProtKB-UniRule"/>
</dbReference>
<dbReference type="GO" id="GO:0009381">
    <property type="term" value="F:excinuclease ABC activity"/>
    <property type="evidence" value="ECO:0007669"/>
    <property type="project" value="UniProtKB-UniRule"/>
</dbReference>
<dbReference type="GO" id="GO:0006289">
    <property type="term" value="P:nucleotide-excision repair"/>
    <property type="evidence" value="ECO:0007669"/>
    <property type="project" value="UniProtKB-UniRule"/>
</dbReference>
<dbReference type="GO" id="GO:0009432">
    <property type="term" value="P:SOS response"/>
    <property type="evidence" value="ECO:0007669"/>
    <property type="project" value="UniProtKB-UniRule"/>
</dbReference>
<dbReference type="CDD" id="cd10434">
    <property type="entry name" value="GIY-YIG_UvrC_Cho"/>
    <property type="match status" value="1"/>
</dbReference>
<dbReference type="FunFam" id="3.30.420.340:FF:000001">
    <property type="entry name" value="UvrABC system protein C"/>
    <property type="match status" value="1"/>
</dbReference>
<dbReference type="FunFam" id="3.40.1440.10:FF:000001">
    <property type="entry name" value="UvrABC system protein C"/>
    <property type="match status" value="1"/>
</dbReference>
<dbReference type="Gene3D" id="1.10.150.20">
    <property type="entry name" value="5' to 3' exonuclease, C-terminal subdomain"/>
    <property type="match status" value="1"/>
</dbReference>
<dbReference type="Gene3D" id="3.40.1440.10">
    <property type="entry name" value="GIY-YIG endonuclease"/>
    <property type="match status" value="1"/>
</dbReference>
<dbReference type="Gene3D" id="4.10.860.10">
    <property type="entry name" value="UVR domain"/>
    <property type="match status" value="1"/>
</dbReference>
<dbReference type="Gene3D" id="3.30.420.340">
    <property type="entry name" value="UvrC, RNAse H endonuclease domain"/>
    <property type="match status" value="1"/>
</dbReference>
<dbReference type="HAMAP" id="MF_00203">
    <property type="entry name" value="UvrC"/>
    <property type="match status" value="1"/>
</dbReference>
<dbReference type="InterPro" id="IPR000305">
    <property type="entry name" value="GIY-YIG_endonuc"/>
</dbReference>
<dbReference type="InterPro" id="IPR035901">
    <property type="entry name" value="GIY-YIG_endonuc_sf"/>
</dbReference>
<dbReference type="InterPro" id="IPR047296">
    <property type="entry name" value="GIY-YIG_UvrC_Cho"/>
</dbReference>
<dbReference type="InterPro" id="IPR003583">
    <property type="entry name" value="Hlx-hairpin-Hlx_DNA-bd_motif"/>
</dbReference>
<dbReference type="InterPro" id="IPR010994">
    <property type="entry name" value="RuvA_2-like"/>
</dbReference>
<dbReference type="InterPro" id="IPR001943">
    <property type="entry name" value="UVR_dom"/>
</dbReference>
<dbReference type="InterPro" id="IPR036876">
    <property type="entry name" value="UVR_dom_sf"/>
</dbReference>
<dbReference type="InterPro" id="IPR050066">
    <property type="entry name" value="UvrABC_protein_C"/>
</dbReference>
<dbReference type="InterPro" id="IPR004791">
    <property type="entry name" value="UvrC"/>
</dbReference>
<dbReference type="InterPro" id="IPR001162">
    <property type="entry name" value="UvrC_RNase_H_dom"/>
</dbReference>
<dbReference type="InterPro" id="IPR038476">
    <property type="entry name" value="UvrC_RNase_H_dom_sf"/>
</dbReference>
<dbReference type="NCBIfam" id="NF001824">
    <property type="entry name" value="PRK00558.1-5"/>
    <property type="match status" value="1"/>
</dbReference>
<dbReference type="NCBIfam" id="TIGR00194">
    <property type="entry name" value="uvrC"/>
    <property type="match status" value="1"/>
</dbReference>
<dbReference type="PANTHER" id="PTHR30562:SF1">
    <property type="entry name" value="UVRABC SYSTEM PROTEIN C"/>
    <property type="match status" value="1"/>
</dbReference>
<dbReference type="PANTHER" id="PTHR30562">
    <property type="entry name" value="UVRC/OXIDOREDUCTASE"/>
    <property type="match status" value="1"/>
</dbReference>
<dbReference type="Pfam" id="PF01541">
    <property type="entry name" value="GIY-YIG"/>
    <property type="match status" value="1"/>
</dbReference>
<dbReference type="Pfam" id="PF14520">
    <property type="entry name" value="HHH_5"/>
    <property type="match status" value="1"/>
</dbReference>
<dbReference type="Pfam" id="PF02151">
    <property type="entry name" value="UVR"/>
    <property type="match status" value="1"/>
</dbReference>
<dbReference type="Pfam" id="PF22920">
    <property type="entry name" value="UvrC_RNaseH"/>
    <property type="match status" value="2"/>
</dbReference>
<dbReference type="Pfam" id="PF08459">
    <property type="entry name" value="UvrC_RNaseH_dom"/>
    <property type="match status" value="1"/>
</dbReference>
<dbReference type="SMART" id="SM00465">
    <property type="entry name" value="GIYc"/>
    <property type="match status" value="1"/>
</dbReference>
<dbReference type="SMART" id="SM00278">
    <property type="entry name" value="HhH1"/>
    <property type="match status" value="2"/>
</dbReference>
<dbReference type="SUPFAM" id="SSF46600">
    <property type="entry name" value="C-terminal UvrC-binding domain of UvrB"/>
    <property type="match status" value="1"/>
</dbReference>
<dbReference type="SUPFAM" id="SSF82771">
    <property type="entry name" value="GIY-YIG endonuclease"/>
    <property type="match status" value="1"/>
</dbReference>
<dbReference type="SUPFAM" id="SSF47781">
    <property type="entry name" value="RuvA domain 2-like"/>
    <property type="match status" value="1"/>
</dbReference>
<dbReference type="PROSITE" id="PS50164">
    <property type="entry name" value="GIY_YIG"/>
    <property type="match status" value="1"/>
</dbReference>
<dbReference type="PROSITE" id="PS50151">
    <property type="entry name" value="UVR"/>
    <property type="match status" value="1"/>
</dbReference>
<dbReference type="PROSITE" id="PS50165">
    <property type="entry name" value="UVRC"/>
    <property type="match status" value="1"/>
</dbReference>
<accession>A0K5W8</accession>
<proteinExistence type="inferred from homology"/>
<feature type="chain" id="PRO_1000077757" description="UvrABC system protein C">
    <location>
        <begin position="1"/>
        <end position="681"/>
    </location>
</feature>
<feature type="domain" description="GIY-YIG" evidence="1">
    <location>
        <begin position="22"/>
        <end position="100"/>
    </location>
</feature>
<feature type="domain" description="UVR" evidence="1">
    <location>
        <begin position="209"/>
        <end position="244"/>
    </location>
</feature>
<keyword id="KW-0963">Cytoplasm</keyword>
<keyword id="KW-0227">DNA damage</keyword>
<keyword id="KW-0228">DNA excision</keyword>
<keyword id="KW-0234">DNA repair</keyword>
<keyword id="KW-0267">Excision nuclease</keyword>
<keyword id="KW-0742">SOS response</keyword>
<comment type="function">
    <text evidence="1">The UvrABC repair system catalyzes the recognition and processing of DNA lesions. UvrC both incises the 5' and 3' sides of the lesion. The N-terminal half is responsible for the 3' incision and the C-terminal half is responsible for the 5' incision.</text>
</comment>
<comment type="subunit">
    <text evidence="1">Interacts with UvrB in an incision complex.</text>
</comment>
<comment type="subcellular location">
    <subcellularLocation>
        <location evidence="1">Cytoplasm</location>
    </subcellularLocation>
</comment>
<comment type="similarity">
    <text evidence="1">Belongs to the UvrC family.</text>
</comment>
<name>UVRC_BURCH</name>
<sequence>MTSPEASATPFEPKKILAQLPHMPGVYRYYDTTGAVLYVGKARDLKKRVSSYFTKTQLSPRIAMMVTRIARIETTVTRSEAEALLLENNLIKALAPRYNILFRDDKSYPYLKLTAHRFPRMAYYRGSVDKQNQYFGPFPSAWAVRESIQILQRVFQLRTCEDSVFNNRTRPCLLHQIGRCTAPCVGAISEEDYAVDVSNAARFLLGRQSEVMKELEQKMHAFAAELKFEQAAAVRNQMSSLATVLHQQAIEVGSDSDVDILAVVAQGGRVCVNLAMVRGGRHLGDKAYFPTHVESALTLAEGGLGEEVEPAEAVDATADAPVDTVPDQPAEEAGSARGAAAASVEAEVLDAFIAQHYLGNRVPPVLVVSHAPASRDLLELLSEQAGHKVSLVRQPQGQRRAWLSMAEQNARLALARLLSEQGSQQARTRALADTLSYDSDDLATLRIECFDISHTMGEATQASCVVYHHHKMQSSEYRRYNITGITPGDDYAAMRQVLTRRYEKMVEQAAQAAAVDEAAGIDGESTRQAEASSLLPNIVLIDGGKGQVEIARQVFTELGLDTSMLVGVAKGEGRKVGLETLVFADGRAPLELGKESAALMLVAQIRDEAHRFAITGMRAKRAKARQTSRLEELEGVGAKRRQRLLARFGGLRGVVAASVEELASVEGISHALAEQIYKQLH</sequence>
<organism>
    <name type="scientific">Burkholderia cenocepacia (strain HI2424)</name>
    <dbReference type="NCBI Taxonomy" id="331272"/>
    <lineage>
        <taxon>Bacteria</taxon>
        <taxon>Pseudomonadati</taxon>
        <taxon>Pseudomonadota</taxon>
        <taxon>Betaproteobacteria</taxon>
        <taxon>Burkholderiales</taxon>
        <taxon>Burkholderiaceae</taxon>
        <taxon>Burkholderia</taxon>
        <taxon>Burkholderia cepacia complex</taxon>
    </lineage>
</organism>
<gene>
    <name evidence="1" type="primary">uvrC</name>
    <name type="ordered locus">Bcen2424_1143</name>
</gene>